<organism>
    <name type="scientific">Salmonella paratyphi A (strain ATCC 9150 / SARB42)</name>
    <dbReference type="NCBI Taxonomy" id="295319"/>
    <lineage>
        <taxon>Bacteria</taxon>
        <taxon>Pseudomonadati</taxon>
        <taxon>Pseudomonadota</taxon>
        <taxon>Gammaproteobacteria</taxon>
        <taxon>Enterobacterales</taxon>
        <taxon>Enterobacteriaceae</taxon>
        <taxon>Salmonella</taxon>
    </lineage>
</organism>
<feature type="chain" id="PRO_0000237818" description="2-C-methyl-D-erythritol 4-phosphate cytidylyltransferase">
    <location>
        <begin position="1"/>
        <end position="236"/>
    </location>
</feature>
<feature type="site" description="Transition state stabilizer" evidence="1">
    <location>
        <position position="20"/>
    </location>
</feature>
<feature type="site" description="Transition state stabilizer" evidence="1">
    <location>
        <position position="27"/>
    </location>
</feature>
<feature type="site" description="Positions MEP for the nucleophilic attack" evidence="1">
    <location>
        <position position="157"/>
    </location>
</feature>
<feature type="site" description="Positions MEP for the nucleophilic attack" evidence="1">
    <location>
        <position position="213"/>
    </location>
</feature>
<accession>Q5PEG1</accession>
<dbReference type="EC" id="2.7.7.60" evidence="1"/>
<dbReference type="EMBL" id="CP000026">
    <property type="protein sequence ID" value="AAV78641.1"/>
    <property type="molecule type" value="Genomic_DNA"/>
</dbReference>
<dbReference type="RefSeq" id="WP_000741651.1">
    <property type="nucleotide sequence ID" value="NC_006511.1"/>
</dbReference>
<dbReference type="SMR" id="Q5PEG1"/>
<dbReference type="KEGG" id="spt:SPA2786"/>
<dbReference type="HOGENOM" id="CLU_061281_3_1_6"/>
<dbReference type="UniPathway" id="UPA00056">
    <property type="reaction ID" value="UER00093"/>
</dbReference>
<dbReference type="Proteomes" id="UP000008185">
    <property type="component" value="Chromosome"/>
</dbReference>
<dbReference type="GO" id="GO:0050518">
    <property type="term" value="F:2-C-methyl-D-erythritol 4-phosphate cytidylyltransferase activity"/>
    <property type="evidence" value="ECO:0007669"/>
    <property type="project" value="UniProtKB-UniRule"/>
</dbReference>
<dbReference type="GO" id="GO:0019288">
    <property type="term" value="P:isopentenyl diphosphate biosynthetic process, methylerythritol 4-phosphate pathway"/>
    <property type="evidence" value="ECO:0007669"/>
    <property type="project" value="UniProtKB-UniRule"/>
</dbReference>
<dbReference type="CDD" id="cd02516">
    <property type="entry name" value="CDP-ME_synthetase"/>
    <property type="match status" value="1"/>
</dbReference>
<dbReference type="FunFam" id="3.90.550.10:FF:000003">
    <property type="entry name" value="2-C-methyl-D-erythritol 4-phosphate cytidylyltransferase"/>
    <property type="match status" value="1"/>
</dbReference>
<dbReference type="Gene3D" id="3.90.550.10">
    <property type="entry name" value="Spore Coat Polysaccharide Biosynthesis Protein SpsA, Chain A"/>
    <property type="match status" value="1"/>
</dbReference>
<dbReference type="HAMAP" id="MF_00108">
    <property type="entry name" value="IspD"/>
    <property type="match status" value="1"/>
</dbReference>
<dbReference type="InterPro" id="IPR001228">
    <property type="entry name" value="IspD"/>
</dbReference>
<dbReference type="InterPro" id="IPR034683">
    <property type="entry name" value="IspD/TarI"/>
</dbReference>
<dbReference type="InterPro" id="IPR050088">
    <property type="entry name" value="IspD/TarI_cytidylyltransf_bact"/>
</dbReference>
<dbReference type="InterPro" id="IPR018294">
    <property type="entry name" value="ISPD_synthase_CS"/>
</dbReference>
<dbReference type="InterPro" id="IPR029044">
    <property type="entry name" value="Nucleotide-diphossugar_trans"/>
</dbReference>
<dbReference type="NCBIfam" id="TIGR00453">
    <property type="entry name" value="ispD"/>
    <property type="match status" value="1"/>
</dbReference>
<dbReference type="PANTHER" id="PTHR32125">
    <property type="entry name" value="2-C-METHYL-D-ERYTHRITOL 4-PHOSPHATE CYTIDYLYLTRANSFERASE, CHLOROPLASTIC"/>
    <property type="match status" value="1"/>
</dbReference>
<dbReference type="PANTHER" id="PTHR32125:SF4">
    <property type="entry name" value="2-C-METHYL-D-ERYTHRITOL 4-PHOSPHATE CYTIDYLYLTRANSFERASE, CHLOROPLASTIC"/>
    <property type="match status" value="1"/>
</dbReference>
<dbReference type="Pfam" id="PF01128">
    <property type="entry name" value="IspD"/>
    <property type="match status" value="1"/>
</dbReference>
<dbReference type="SUPFAM" id="SSF53448">
    <property type="entry name" value="Nucleotide-diphospho-sugar transferases"/>
    <property type="match status" value="1"/>
</dbReference>
<dbReference type="PROSITE" id="PS01295">
    <property type="entry name" value="ISPD"/>
    <property type="match status" value="1"/>
</dbReference>
<name>ISPD_SALPA</name>
<gene>
    <name evidence="1" type="primary">ispD</name>
    <name type="ordered locus">SPA2786</name>
</gene>
<keyword id="KW-0414">Isoprene biosynthesis</keyword>
<keyword id="KW-0548">Nucleotidyltransferase</keyword>
<keyword id="KW-0808">Transferase</keyword>
<comment type="function">
    <text evidence="1">Catalyzes the formation of 4-diphosphocytidyl-2-C-methyl-D-erythritol from CTP and 2-C-methyl-D-erythritol 4-phosphate (MEP).</text>
</comment>
<comment type="catalytic activity">
    <reaction evidence="1">
        <text>2-C-methyl-D-erythritol 4-phosphate + CTP + H(+) = 4-CDP-2-C-methyl-D-erythritol + diphosphate</text>
        <dbReference type="Rhea" id="RHEA:13429"/>
        <dbReference type="ChEBI" id="CHEBI:15378"/>
        <dbReference type="ChEBI" id="CHEBI:33019"/>
        <dbReference type="ChEBI" id="CHEBI:37563"/>
        <dbReference type="ChEBI" id="CHEBI:57823"/>
        <dbReference type="ChEBI" id="CHEBI:58262"/>
        <dbReference type="EC" id="2.7.7.60"/>
    </reaction>
</comment>
<comment type="pathway">
    <text evidence="1">Isoprenoid biosynthesis; isopentenyl diphosphate biosynthesis via DXP pathway; isopentenyl diphosphate from 1-deoxy-D-xylulose 5-phosphate: step 2/6.</text>
</comment>
<comment type="subunit">
    <text evidence="1">Homodimer.</text>
</comment>
<comment type="similarity">
    <text evidence="1">Belongs to the IspD/TarI cytidylyltransferase family. IspD subfamily.</text>
</comment>
<proteinExistence type="inferred from homology"/>
<protein>
    <recommendedName>
        <fullName evidence="1">2-C-methyl-D-erythritol 4-phosphate cytidylyltransferase</fullName>
        <ecNumber evidence="1">2.7.7.60</ecNumber>
    </recommendedName>
    <alternativeName>
        <fullName evidence="1">4-diphosphocytidyl-2C-methyl-D-erythritol synthase</fullName>
    </alternativeName>
    <alternativeName>
        <fullName evidence="1">MEP cytidylyltransferase</fullName>
        <shortName evidence="1">MCT</shortName>
    </alternativeName>
</protein>
<reference key="1">
    <citation type="journal article" date="2004" name="Nat. Genet.">
        <title>Comparison of genome degradation in Paratyphi A and Typhi, human-restricted serovars of Salmonella enterica that cause typhoid.</title>
        <authorList>
            <person name="McClelland M."/>
            <person name="Sanderson K.E."/>
            <person name="Clifton S.W."/>
            <person name="Latreille P."/>
            <person name="Porwollik S."/>
            <person name="Sabo A."/>
            <person name="Meyer R."/>
            <person name="Bieri T."/>
            <person name="Ozersky P."/>
            <person name="McLellan M."/>
            <person name="Harkins C.R."/>
            <person name="Wang C."/>
            <person name="Nguyen C."/>
            <person name="Berghoff A."/>
            <person name="Elliott G."/>
            <person name="Kohlberg S."/>
            <person name="Strong C."/>
            <person name="Du F."/>
            <person name="Carter J."/>
            <person name="Kremizki C."/>
            <person name="Layman D."/>
            <person name="Leonard S."/>
            <person name="Sun H."/>
            <person name="Fulton L."/>
            <person name="Nash W."/>
            <person name="Miner T."/>
            <person name="Minx P."/>
            <person name="Delehaunty K."/>
            <person name="Fronick C."/>
            <person name="Magrini V."/>
            <person name="Nhan M."/>
            <person name="Warren W."/>
            <person name="Florea L."/>
            <person name="Spieth J."/>
            <person name="Wilson R.K."/>
        </authorList>
    </citation>
    <scope>NUCLEOTIDE SEQUENCE [LARGE SCALE GENOMIC DNA]</scope>
    <source>
        <strain>ATCC 9150 / SARB42</strain>
    </source>
</reference>
<sequence length="236" mass="25729">MAATLLDVCAVVPAAGFGRRMQTECPKQYLSIGNKTILEHSVHALLAHPRVTRVVIAISPGDHRFAQLPLANHPQITVVDGGNERADSVLAGLQAVAKAQWVLVHDAARPCLHQDDLARLLAISENSRVGGILASPVRDTMKRGEPGKTAIAHTVERADLWHALTPQFFPRELLHDCLTRALNEGAIITDEASALEYCGFHPALVEGRADNIKVTRPEDLALAEFYLTRTIHQEKA</sequence>
<evidence type="ECO:0000255" key="1">
    <source>
        <dbReference type="HAMAP-Rule" id="MF_00108"/>
    </source>
</evidence>